<evidence type="ECO:0000255" key="1">
    <source>
        <dbReference type="HAMAP-Rule" id="MF_03116"/>
    </source>
</evidence>
<protein>
    <recommendedName>
        <fullName evidence="1">Methylthioribulose-1-phosphate dehydratase</fullName>
        <shortName evidence="1">MTRu-1-P dehydratase</shortName>
        <ecNumber evidence="1">4.2.1.109</ecNumber>
    </recommendedName>
</protein>
<accession>P0CM14</accession>
<accession>Q55IV5</accession>
<accession>Q5KCU6</accession>
<proteinExistence type="inferred from homology"/>
<name>MTNB_CRYNJ</name>
<reference key="1">
    <citation type="journal article" date="2005" name="Science">
        <title>The genome of the basidiomycetous yeast and human pathogen Cryptococcus neoformans.</title>
        <authorList>
            <person name="Loftus B.J."/>
            <person name="Fung E."/>
            <person name="Roncaglia P."/>
            <person name="Rowley D."/>
            <person name="Amedeo P."/>
            <person name="Bruno D."/>
            <person name="Vamathevan J."/>
            <person name="Miranda M."/>
            <person name="Anderson I.J."/>
            <person name="Fraser J.A."/>
            <person name="Allen J.E."/>
            <person name="Bosdet I.E."/>
            <person name="Brent M.R."/>
            <person name="Chiu R."/>
            <person name="Doering T.L."/>
            <person name="Donlin M.J."/>
            <person name="D'Souza C.A."/>
            <person name="Fox D.S."/>
            <person name="Grinberg V."/>
            <person name="Fu J."/>
            <person name="Fukushima M."/>
            <person name="Haas B.J."/>
            <person name="Huang J.C."/>
            <person name="Janbon G."/>
            <person name="Jones S.J.M."/>
            <person name="Koo H.L."/>
            <person name="Krzywinski M.I."/>
            <person name="Kwon-Chung K.J."/>
            <person name="Lengeler K.B."/>
            <person name="Maiti R."/>
            <person name="Marra M.A."/>
            <person name="Marra R.E."/>
            <person name="Mathewson C.A."/>
            <person name="Mitchell T.G."/>
            <person name="Pertea M."/>
            <person name="Riggs F.R."/>
            <person name="Salzberg S.L."/>
            <person name="Schein J.E."/>
            <person name="Shvartsbeyn A."/>
            <person name="Shin H."/>
            <person name="Shumway M."/>
            <person name="Specht C.A."/>
            <person name="Suh B.B."/>
            <person name="Tenney A."/>
            <person name="Utterback T.R."/>
            <person name="Wickes B.L."/>
            <person name="Wortman J.R."/>
            <person name="Wye N.H."/>
            <person name="Kronstad J.W."/>
            <person name="Lodge J.K."/>
            <person name="Heitman J."/>
            <person name="Davis R.W."/>
            <person name="Fraser C.M."/>
            <person name="Hyman R.W."/>
        </authorList>
    </citation>
    <scope>NUCLEOTIDE SEQUENCE [LARGE SCALE GENOMIC DNA]</scope>
    <source>
        <strain>JEC21 / ATCC MYA-565</strain>
    </source>
</reference>
<keyword id="KW-0028">Amino-acid biosynthesis</keyword>
<keyword id="KW-0963">Cytoplasm</keyword>
<keyword id="KW-0456">Lyase</keyword>
<keyword id="KW-0479">Metal-binding</keyword>
<keyword id="KW-0486">Methionine biosynthesis</keyword>
<keyword id="KW-1185">Reference proteome</keyword>
<keyword id="KW-0862">Zinc</keyword>
<organism>
    <name type="scientific">Cryptococcus neoformans var. neoformans serotype D (strain JEC21 / ATCC MYA-565)</name>
    <name type="common">Filobasidiella neoformans</name>
    <dbReference type="NCBI Taxonomy" id="214684"/>
    <lineage>
        <taxon>Eukaryota</taxon>
        <taxon>Fungi</taxon>
        <taxon>Dikarya</taxon>
        <taxon>Basidiomycota</taxon>
        <taxon>Agaricomycotina</taxon>
        <taxon>Tremellomycetes</taxon>
        <taxon>Tremellales</taxon>
        <taxon>Cryptococcaceae</taxon>
        <taxon>Cryptococcus</taxon>
        <taxon>Cryptococcus neoformans species complex</taxon>
    </lineage>
</organism>
<gene>
    <name evidence="1" type="primary">MDE1</name>
    <name type="ordered locus">CNH02290</name>
</gene>
<feature type="chain" id="PRO_0000393822" description="Methylthioribulose-1-phosphate dehydratase">
    <location>
        <begin position="1"/>
        <end position="244"/>
    </location>
</feature>
<feature type="active site" description="Proton donor/acceptor" evidence="1">
    <location>
        <position position="148"/>
    </location>
</feature>
<feature type="binding site" evidence="1">
    <location>
        <position position="104"/>
    </location>
    <ligand>
        <name>substrate</name>
    </ligand>
</feature>
<feature type="binding site" evidence="1">
    <location>
        <position position="122"/>
    </location>
    <ligand>
        <name>Zn(2+)</name>
        <dbReference type="ChEBI" id="CHEBI:29105"/>
    </ligand>
</feature>
<feature type="binding site" evidence="1">
    <location>
        <position position="124"/>
    </location>
    <ligand>
        <name>Zn(2+)</name>
        <dbReference type="ChEBI" id="CHEBI:29105"/>
    </ligand>
</feature>
<feature type="binding site" evidence="1">
    <location>
        <position position="204"/>
    </location>
    <ligand>
        <name>Zn(2+)</name>
        <dbReference type="ChEBI" id="CHEBI:29105"/>
    </ligand>
</feature>
<sequence>MAKTYTPEEAEALVHSHDPEHPANLICDLCREFYKLGWVTGTGGGISIRKDDVVYLAPSGVQKERIKPEHIFVLPFAQSSVPKPGSKRDFIRIPSKKGLNESQCTPLFWNAFTMREAGACIHTHSQHAVLLTLLLPRDAPSFRISHQEMIKGVRLGGVGKTLKFFETLEVPIIDNTAFEEDLTEGMAAAMARYPDAPAILVRRHGVYVWGNTWEQAKTQAECLDYLFEIACKMIQNKIPLEGDT</sequence>
<comment type="function">
    <text evidence="1">Catalyzes the dehydration of methylthioribulose-1-phosphate (MTRu-1-P) into 2,3-diketo-5-methylthiopentyl-1-phosphate (DK-MTP-1-P).</text>
</comment>
<comment type="catalytic activity">
    <reaction evidence="1">
        <text>5-(methylsulfanyl)-D-ribulose 1-phosphate = 5-methylsulfanyl-2,3-dioxopentyl phosphate + H2O</text>
        <dbReference type="Rhea" id="RHEA:15549"/>
        <dbReference type="ChEBI" id="CHEBI:15377"/>
        <dbReference type="ChEBI" id="CHEBI:58548"/>
        <dbReference type="ChEBI" id="CHEBI:58828"/>
        <dbReference type="EC" id="4.2.1.109"/>
    </reaction>
</comment>
<comment type="cofactor">
    <cofactor evidence="1">
        <name>Zn(2+)</name>
        <dbReference type="ChEBI" id="CHEBI:29105"/>
    </cofactor>
    <text evidence="1">Binds 1 zinc ion per subunit.</text>
</comment>
<comment type="pathway">
    <text evidence="1">Amino-acid biosynthesis; L-methionine biosynthesis via salvage pathway; L-methionine from S-methyl-5-thio-alpha-D-ribose 1-phosphate: step 2/6.</text>
</comment>
<comment type="subcellular location">
    <subcellularLocation>
        <location evidence="1">Cytoplasm</location>
    </subcellularLocation>
</comment>
<comment type="similarity">
    <text evidence="1">Belongs to the aldolase class II family. MtnB subfamily.</text>
</comment>
<dbReference type="EC" id="4.2.1.109" evidence="1"/>
<dbReference type="EMBL" id="AE017348">
    <property type="protein sequence ID" value="AAW45095.1"/>
    <property type="molecule type" value="Genomic_DNA"/>
</dbReference>
<dbReference type="RefSeq" id="XP_572402.1">
    <property type="nucleotide sequence ID" value="XM_572402.1"/>
</dbReference>
<dbReference type="SMR" id="P0CM14"/>
<dbReference type="FunCoup" id="P0CM14">
    <property type="interactions" value="290"/>
</dbReference>
<dbReference type="STRING" id="214684.P0CM14"/>
<dbReference type="PaxDb" id="214684-P0CM14"/>
<dbReference type="EnsemblFungi" id="AAW45095">
    <property type="protein sequence ID" value="AAW45095"/>
    <property type="gene ID" value="CNH02290"/>
</dbReference>
<dbReference type="GeneID" id="3259292"/>
<dbReference type="KEGG" id="cne:CNH02290"/>
<dbReference type="VEuPathDB" id="FungiDB:CNH02290"/>
<dbReference type="eggNOG" id="KOG2631">
    <property type="taxonomic scope" value="Eukaryota"/>
</dbReference>
<dbReference type="HOGENOM" id="CLU_006033_4_0_1"/>
<dbReference type="InParanoid" id="P0CM14"/>
<dbReference type="OMA" id="WFPGTSG"/>
<dbReference type="OrthoDB" id="191080at2759"/>
<dbReference type="UniPathway" id="UPA00904">
    <property type="reaction ID" value="UER00875"/>
</dbReference>
<dbReference type="Proteomes" id="UP000002149">
    <property type="component" value="Chromosome 8"/>
</dbReference>
<dbReference type="GO" id="GO:0005737">
    <property type="term" value="C:cytoplasm"/>
    <property type="evidence" value="ECO:0000318"/>
    <property type="project" value="GO_Central"/>
</dbReference>
<dbReference type="GO" id="GO:0046570">
    <property type="term" value="F:methylthioribulose 1-phosphate dehydratase activity"/>
    <property type="evidence" value="ECO:0000318"/>
    <property type="project" value="GO_Central"/>
</dbReference>
<dbReference type="GO" id="GO:0008270">
    <property type="term" value="F:zinc ion binding"/>
    <property type="evidence" value="ECO:0007669"/>
    <property type="project" value="UniProtKB-UniRule"/>
</dbReference>
<dbReference type="GO" id="GO:0019509">
    <property type="term" value="P:L-methionine salvage from methylthioadenosine"/>
    <property type="evidence" value="ECO:0000318"/>
    <property type="project" value="GO_Central"/>
</dbReference>
<dbReference type="FunFam" id="3.40.225.10:FF:000003">
    <property type="entry name" value="Methylthioribulose-1-phosphate dehydratase"/>
    <property type="match status" value="1"/>
</dbReference>
<dbReference type="Gene3D" id="3.40.225.10">
    <property type="entry name" value="Class II aldolase/adducin N-terminal domain"/>
    <property type="match status" value="1"/>
</dbReference>
<dbReference type="HAMAP" id="MF_03116">
    <property type="entry name" value="Salvage_MtnB_euk"/>
    <property type="match status" value="1"/>
</dbReference>
<dbReference type="InterPro" id="IPR001303">
    <property type="entry name" value="Aldolase_II/adducin_N"/>
</dbReference>
<dbReference type="InterPro" id="IPR036409">
    <property type="entry name" value="Aldolase_II/adducin_N_sf"/>
</dbReference>
<dbReference type="InterPro" id="IPR017714">
    <property type="entry name" value="MethylthioRu-1-P_deHdtase_MtnB"/>
</dbReference>
<dbReference type="InterPro" id="IPR027514">
    <property type="entry name" value="Salvage_MtnB_euk"/>
</dbReference>
<dbReference type="NCBIfam" id="TIGR03328">
    <property type="entry name" value="salvage_mtnB"/>
    <property type="match status" value="1"/>
</dbReference>
<dbReference type="PANTHER" id="PTHR10640">
    <property type="entry name" value="METHYLTHIORIBULOSE-1-PHOSPHATE DEHYDRATASE"/>
    <property type="match status" value="1"/>
</dbReference>
<dbReference type="PANTHER" id="PTHR10640:SF7">
    <property type="entry name" value="METHYLTHIORIBULOSE-1-PHOSPHATE DEHYDRATASE"/>
    <property type="match status" value="1"/>
</dbReference>
<dbReference type="Pfam" id="PF00596">
    <property type="entry name" value="Aldolase_II"/>
    <property type="match status" value="1"/>
</dbReference>
<dbReference type="SMART" id="SM01007">
    <property type="entry name" value="Aldolase_II"/>
    <property type="match status" value="1"/>
</dbReference>
<dbReference type="SUPFAM" id="SSF53639">
    <property type="entry name" value="AraD/HMP-PK domain-like"/>
    <property type="match status" value="1"/>
</dbReference>